<name>RBR1_ORYSI</name>
<keyword id="KW-0131">Cell cycle</keyword>
<keyword id="KW-0539">Nucleus</keyword>
<keyword id="KW-1185">Reference proteome</keyword>
<keyword id="KW-0678">Repressor</keyword>
<keyword id="KW-0804">Transcription</keyword>
<keyword id="KW-0805">Transcription regulation</keyword>
<reference key="1">
    <citation type="journal article" date="2005" name="PLoS Biol.">
        <title>The genomes of Oryza sativa: a history of duplications.</title>
        <authorList>
            <person name="Yu J."/>
            <person name="Wang J."/>
            <person name="Lin W."/>
            <person name="Li S."/>
            <person name="Li H."/>
            <person name="Zhou J."/>
            <person name="Ni P."/>
            <person name="Dong W."/>
            <person name="Hu S."/>
            <person name="Zeng C."/>
            <person name="Zhang J."/>
            <person name="Zhang Y."/>
            <person name="Li R."/>
            <person name="Xu Z."/>
            <person name="Li S."/>
            <person name="Li X."/>
            <person name="Zheng H."/>
            <person name="Cong L."/>
            <person name="Lin L."/>
            <person name="Yin J."/>
            <person name="Geng J."/>
            <person name="Li G."/>
            <person name="Shi J."/>
            <person name="Liu J."/>
            <person name="Lv H."/>
            <person name="Li J."/>
            <person name="Wang J."/>
            <person name="Deng Y."/>
            <person name="Ran L."/>
            <person name="Shi X."/>
            <person name="Wang X."/>
            <person name="Wu Q."/>
            <person name="Li C."/>
            <person name="Ren X."/>
            <person name="Wang J."/>
            <person name="Wang X."/>
            <person name="Li D."/>
            <person name="Liu D."/>
            <person name="Zhang X."/>
            <person name="Ji Z."/>
            <person name="Zhao W."/>
            <person name="Sun Y."/>
            <person name="Zhang Z."/>
            <person name="Bao J."/>
            <person name="Han Y."/>
            <person name="Dong L."/>
            <person name="Ji J."/>
            <person name="Chen P."/>
            <person name="Wu S."/>
            <person name="Liu J."/>
            <person name="Xiao Y."/>
            <person name="Bu D."/>
            <person name="Tan J."/>
            <person name="Yang L."/>
            <person name="Ye C."/>
            <person name="Zhang J."/>
            <person name="Xu J."/>
            <person name="Zhou Y."/>
            <person name="Yu Y."/>
            <person name="Zhang B."/>
            <person name="Zhuang S."/>
            <person name="Wei H."/>
            <person name="Liu B."/>
            <person name="Lei M."/>
            <person name="Yu H."/>
            <person name="Li Y."/>
            <person name="Xu H."/>
            <person name="Wei S."/>
            <person name="He X."/>
            <person name="Fang L."/>
            <person name="Zhang Z."/>
            <person name="Zhang Y."/>
            <person name="Huang X."/>
            <person name="Su Z."/>
            <person name="Tong W."/>
            <person name="Li J."/>
            <person name="Tong Z."/>
            <person name="Li S."/>
            <person name="Ye J."/>
            <person name="Wang L."/>
            <person name="Fang L."/>
            <person name="Lei T."/>
            <person name="Chen C.-S."/>
            <person name="Chen H.-C."/>
            <person name="Xu Z."/>
            <person name="Li H."/>
            <person name="Huang H."/>
            <person name="Zhang F."/>
            <person name="Xu H."/>
            <person name="Li N."/>
            <person name="Zhao C."/>
            <person name="Li S."/>
            <person name="Dong L."/>
            <person name="Huang Y."/>
            <person name="Li L."/>
            <person name="Xi Y."/>
            <person name="Qi Q."/>
            <person name="Li W."/>
            <person name="Zhang B."/>
            <person name="Hu W."/>
            <person name="Zhang Y."/>
            <person name="Tian X."/>
            <person name="Jiao Y."/>
            <person name="Liang X."/>
            <person name="Jin J."/>
            <person name="Gao L."/>
            <person name="Zheng W."/>
            <person name="Hao B."/>
            <person name="Liu S.-M."/>
            <person name="Wang W."/>
            <person name="Yuan L."/>
            <person name="Cao M."/>
            <person name="McDermott J."/>
            <person name="Samudrala R."/>
            <person name="Wang J."/>
            <person name="Wong G.K.-S."/>
            <person name="Yang H."/>
        </authorList>
    </citation>
    <scope>NUCLEOTIDE SEQUENCE [LARGE SCALE GENOMIC DNA]</scope>
    <source>
        <strain>cv. 93-11</strain>
    </source>
</reference>
<protein>
    <recommendedName>
        <fullName>Retinoblastoma-related protein 1</fullName>
        <shortName>OsRBR1</shortName>
    </recommendedName>
</protein>
<accession>A2YXJ7</accession>
<proteinExistence type="inferred from homology"/>
<comment type="function">
    <text evidence="1">Regulator of biological processes that recruits a histone deacetylase to control gene transcription. May play a role in the entry into mitosis, negatively regulating the cell proliferation. Formation of stable complexes with geminiviridae replication-associated proteins may create a cellular environment which favors viral DNA replication (By similarity).</text>
</comment>
<comment type="subcellular location">
    <subcellularLocation>
        <location evidence="1">Nucleus</location>
    </subcellularLocation>
</comment>
<comment type="similarity">
    <text evidence="3">Belongs to the retinoblastoma protein (RB) family.</text>
</comment>
<dbReference type="EMBL" id="CM000133">
    <property type="protein sequence ID" value="EAZ07808.1"/>
    <property type="molecule type" value="Genomic_DNA"/>
</dbReference>
<dbReference type="SMR" id="A2YXJ7"/>
<dbReference type="STRING" id="39946.A2YXJ7"/>
<dbReference type="EnsemblPlants" id="BGIOSGA026573-TA">
    <property type="protein sequence ID" value="BGIOSGA026573-PA"/>
    <property type="gene ID" value="BGIOSGA026573"/>
</dbReference>
<dbReference type="EnsemblPlants" id="OsLaMu_08g0023040.01">
    <property type="protein sequence ID" value="OsLaMu_08g0023040.01"/>
    <property type="gene ID" value="OsLaMu_08g0023040"/>
</dbReference>
<dbReference type="EnsemblPlants" id="OsLima_08g0022740.01">
    <property type="protein sequence ID" value="OsLima_08g0022740.01"/>
    <property type="gene ID" value="OsLima_08g0022740"/>
</dbReference>
<dbReference type="EnsemblPlants" id="OsLiXu_08g0023710.01">
    <property type="protein sequence ID" value="OsLiXu_08g0023710.01"/>
    <property type="gene ID" value="OsLiXu_08g0023710"/>
</dbReference>
<dbReference type="Gramene" id="BGIOSGA026573-TA">
    <property type="protein sequence ID" value="BGIOSGA026573-PA"/>
    <property type="gene ID" value="BGIOSGA026573"/>
</dbReference>
<dbReference type="Gramene" id="OsLaMu_08g0023040.01">
    <property type="protein sequence ID" value="OsLaMu_08g0023040.01"/>
    <property type="gene ID" value="OsLaMu_08g0023040"/>
</dbReference>
<dbReference type="Gramene" id="OsLima_08g0022740.01">
    <property type="protein sequence ID" value="OsLima_08g0022740.01"/>
    <property type="gene ID" value="OsLima_08g0022740"/>
</dbReference>
<dbReference type="Gramene" id="OsLiXu_08g0023710.01">
    <property type="protein sequence ID" value="OsLiXu_08g0023710.01"/>
    <property type="gene ID" value="OsLiXu_08g0023710"/>
</dbReference>
<dbReference type="HOGENOM" id="CLU_015949_0_0_1"/>
<dbReference type="OMA" id="VYCQSTQ"/>
<dbReference type="Proteomes" id="UP000007015">
    <property type="component" value="Chromosome 8"/>
</dbReference>
<dbReference type="GO" id="GO:0000785">
    <property type="term" value="C:chromatin"/>
    <property type="evidence" value="ECO:0007669"/>
    <property type="project" value="TreeGrafter"/>
</dbReference>
<dbReference type="GO" id="GO:0005634">
    <property type="term" value="C:nucleus"/>
    <property type="evidence" value="ECO:0007669"/>
    <property type="project" value="UniProtKB-SubCell"/>
</dbReference>
<dbReference type="GO" id="GO:0005667">
    <property type="term" value="C:transcription regulator complex"/>
    <property type="evidence" value="ECO:0007669"/>
    <property type="project" value="TreeGrafter"/>
</dbReference>
<dbReference type="GO" id="GO:0000977">
    <property type="term" value="F:RNA polymerase II transcription regulatory region sequence-specific DNA binding"/>
    <property type="evidence" value="ECO:0007669"/>
    <property type="project" value="TreeGrafter"/>
</dbReference>
<dbReference type="GO" id="GO:0030154">
    <property type="term" value="P:cell differentiation"/>
    <property type="evidence" value="ECO:0007669"/>
    <property type="project" value="TreeGrafter"/>
</dbReference>
<dbReference type="GO" id="GO:2000134">
    <property type="term" value="P:negative regulation of G1/S transition of mitotic cell cycle"/>
    <property type="evidence" value="ECO:0007669"/>
    <property type="project" value="TreeGrafter"/>
</dbReference>
<dbReference type="GO" id="GO:0006357">
    <property type="term" value="P:regulation of transcription by RNA polymerase II"/>
    <property type="evidence" value="ECO:0007669"/>
    <property type="project" value="InterPro"/>
</dbReference>
<dbReference type="FunFam" id="1.10.472.10:FF:000030">
    <property type="entry name" value="Retinoblastoma-related protein 1"/>
    <property type="match status" value="1"/>
</dbReference>
<dbReference type="FunFam" id="1.10.472.10:FF:000067">
    <property type="entry name" value="Retinoblastoma-related protein 1"/>
    <property type="match status" value="1"/>
</dbReference>
<dbReference type="FunFam" id="1.10.472.140:FF:000003">
    <property type="entry name" value="Retinoblastoma-related protein 1"/>
    <property type="match status" value="1"/>
</dbReference>
<dbReference type="Gene3D" id="1.10.472.140">
    <property type="match status" value="1"/>
</dbReference>
<dbReference type="Gene3D" id="1.10.472.10">
    <property type="entry name" value="Cyclin-like"/>
    <property type="match status" value="2"/>
</dbReference>
<dbReference type="InterPro" id="IPR036915">
    <property type="entry name" value="Cyclin-like_sf"/>
</dbReference>
<dbReference type="InterPro" id="IPR002720">
    <property type="entry name" value="RB_A"/>
</dbReference>
<dbReference type="InterPro" id="IPR002719">
    <property type="entry name" value="RB_B"/>
</dbReference>
<dbReference type="InterPro" id="IPR015030">
    <property type="entry name" value="RB_C"/>
</dbReference>
<dbReference type="InterPro" id="IPR028309">
    <property type="entry name" value="RB_fam"/>
</dbReference>
<dbReference type="InterPro" id="IPR024599">
    <property type="entry name" value="RB_N"/>
</dbReference>
<dbReference type="PANTHER" id="PTHR13742:SF17">
    <property type="entry name" value="RE32990P-RELATED"/>
    <property type="match status" value="1"/>
</dbReference>
<dbReference type="PANTHER" id="PTHR13742">
    <property type="entry name" value="RETINOBLASTOMA-ASSOCIATED PROTEIN RB -RELATED"/>
    <property type="match status" value="1"/>
</dbReference>
<dbReference type="Pfam" id="PF11934">
    <property type="entry name" value="DUF3452"/>
    <property type="match status" value="1"/>
</dbReference>
<dbReference type="Pfam" id="PF01858">
    <property type="entry name" value="RB_A"/>
    <property type="match status" value="1"/>
</dbReference>
<dbReference type="Pfam" id="PF01857">
    <property type="entry name" value="RB_B"/>
    <property type="match status" value="1"/>
</dbReference>
<dbReference type="SMART" id="SM01367">
    <property type="entry name" value="DUF3452"/>
    <property type="match status" value="1"/>
</dbReference>
<dbReference type="SMART" id="SM01368">
    <property type="entry name" value="RB_A"/>
    <property type="match status" value="1"/>
</dbReference>
<dbReference type="SMART" id="SM01369">
    <property type="entry name" value="Rb_C"/>
    <property type="match status" value="1"/>
</dbReference>
<dbReference type="SUPFAM" id="SSF47954">
    <property type="entry name" value="Cyclin-like"/>
    <property type="match status" value="2"/>
</dbReference>
<sequence length="1010" mass="111509">MEGAAPPASSGSEVTGAGSGKVDAGGGAAMEERFADLCKSKLGLDESITRQAMQLFKESKSILLSSMSSLGSGSPEEIERFWSAFVLYCVSRLGKAGKGKEDGGISLCQILRAFSLNIVDFFKEMPQFCIKVGSVLAGLYGSDWEKRLELKELQANVVHLSLLSRYYKRAYQELFLLNDAKPPENSAEPNAQASDYYRFGWLLFLVLRIQTFSRFKDLVTSTNGLVSVLAVLIVHIPVRLRNFNIKESSSFAKKSDKGVNLIASLCEKYHTSEDELSKAIEKTNTLIVDILKKKPCPAASECQQDRLSFIDPEGLTYFKNLLEEDSLKLSLLMLEKEYENAINTKGELDERMFANDEDSLLGSGSLSGGAINLPGTKRKYDVMASPAKSITSPSPMSPPRFCASPTGNGYCSSKMAPITPVSTAMTTAKWLRSTISPLPSKPSGELLRFFSACDKDVTDDITRRAGIILGAIFTSSSFGERICTSVRSTNRIDAIWTEQRKMEALKLYYRVLESMCRAETQILSGNNLTSLLSNERFHRCMIACSAELVLATHKTVTMMFPAVLEKTGITAFDLSKVIESFVRHEDTLPRELKRHLNSLEERLLESMAWEKGSSMYNSLIVARPTLSAEINRLGLLAEPMPSLDAIAAHHNISLEGLPPLPFQKQEHSPDKDEVRSPKRACTERRNVLVDNNSFRSPVKDTLKSKLPPLQSAFLSPTRPNPAAGGELCAETGIGVFLSKIAKLAAIRIRGLCERLQLSQQVLERVYSLVQQIIIQQTALFFNRHIDQIILCSIYGVAKISQLALTFKEIIFGYRKQSQCKPQVFRSVYVHWASRSRNGKTGEDHVDIITFYNEVFIPTVKPLLVELGSGTSPNKKNEEKCAADGPYPESPRLSRFPNLPDMSPKKVSAAHNVYVSPLRTSKMDTLLSPSSKSYYACVGESTHAFQSPSKDLKVINNRLNSGKKVSGRLNFDVVSDLVVARSLSDQNSASAAATTADITTKTPVKLEQPDC</sequence>
<feature type="chain" id="PRO_0000335250" description="Retinoblastoma-related protein 1">
    <location>
        <begin position="1"/>
        <end position="1010"/>
    </location>
</feature>
<feature type="region of interest" description="Disordered" evidence="2">
    <location>
        <begin position="1"/>
        <end position="23"/>
    </location>
</feature>
<feature type="region of interest" description="Pocket">
    <location>
        <begin position="419"/>
        <end position="861"/>
    </location>
</feature>
<feature type="region of interest" description="Domain A">
    <location>
        <begin position="419"/>
        <end position="619"/>
    </location>
</feature>
<feature type="region of interest" description="Spacer">
    <location>
        <begin position="620"/>
        <end position="730"/>
    </location>
</feature>
<feature type="region of interest" description="Disordered" evidence="2">
    <location>
        <begin position="657"/>
        <end position="679"/>
    </location>
</feature>
<feature type="region of interest" description="Domain B">
    <location>
        <begin position="731"/>
        <end position="861"/>
    </location>
</feature>
<feature type="region of interest" description="Disordered" evidence="2">
    <location>
        <begin position="868"/>
        <end position="898"/>
    </location>
</feature>
<feature type="compositionally biased region" description="Basic and acidic residues" evidence="2">
    <location>
        <begin position="664"/>
        <end position="679"/>
    </location>
</feature>
<organism>
    <name type="scientific">Oryza sativa subsp. indica</name>
    <name type="common">Rice</name>
    <dbReference type="NCBI Taxonomy" id="39946"/>
    <lineage>
        <taxon>Eukaryota</taxon>
        <taxon>Viridiplantae</taxon>
        <taxon>Streptophyta</taxon>
        <taxon>Embryophyta</taxon>
        <taxon>Tracheophyta</taxon>
        <taxon>Spermatophyta</taxon>
        <taxon>Magnoliopsida</taxon>
        <taxon>Liliopsida</taxon>
        <taxon>Poales</taxon>
        <taxon>Poaceae</taxon>
        <taxon>BOP clade</taxon>
        <taxon>Oryzoideae</taxon>
        <taxon>Oryzeae</taxon>
        <taxon>Oryzinae</taxon>
        <taxon>Oryza</taxon>
        <taxon>Oryza sativa</taxon>
    </lineage>
</organism>
<evidence type="ECO:0000250" key="1"/>
<evidence type="ECO:0000256" key="2">
    <source>
        <dbReference type="SAM" id="MobiDB-lite"/>
    </source>
</evidence>
<evidence type="ECO:0000305" key="3"/>
<gene>
    <name type="primary">RBR1</name>
    <name type="ORF">OsI_029040</name>
</gene>